<comment type="similarity">
    <text evidence="2">Belongs to the UPF0607 family.</text>
</comment>
<comment type="caution">
    <text evidence="2">Could be the product of a pseudogene.</text>
</comment>
<sequence length="311" mass="34164">MLSARNSMMFGHLSPVRIPRLRGKFNLQLPSLDEQVIPARLLKMEVRAEEPKEATEVKDQVETQGQEDNKMGPCSNGEAASTSRPLETQGNLTSSWYNPRPLEGNVHLKSLTEKNQTDKAQVHAVSFYSKGHGVASSHSPAGGILPFGKPDPLPTVLPAPVPGCSLWPEKAALKVLGKDHLPSSPGLLMVGEDMQPKDPAVLGSSRSSPPRAAGHRSRKRKLSGPPLQLQLTPPLQLRWDRDGGPPPAKLPCLSPEALLVGQASQREGRLQQGNMRKNMRVLSRTSKFRRRKQLLRRRKKTRQGRRGGSCL</sequence>
<proteinExistence type="uncertain"/>
<keyword id="KW-1185">Reference proteome</keyword>
<protein>
    <recommendedName>
        <fullName>Putative UPF0607 protein ENSP00000382826</fullName>
    </recommendedName>
</protein>
<feature type="chain" id="PRO_0000342525" description="Putative UPF0607 protein ENSP00000382826">
    <location>
        <begin position="1"/>
        <end position="311"/>
    </location>
</feature>
<feature type="region of interest" description="Disordered" evidence="1">
    <location>
        <begin position="48"/>
        <end position="99"/>
    </location>
</feature>
<feature type="region of interest" description="Disordered" evidence="1">
    <location>
        <begin position="186"/>
        <end position="229"/>
    </location>
</feature>
<feature type="region of interest" description="Disordered" evidence="1">
    <location>
        <begin position="291"/>
        <end position="311"/>
    </location>
</feature>
<feature type="compositionally biased region" description="Basic and acidic residues" evidence="1">
    <location>
        <begin position="48"/>
        <end position="61"/>
    </location>
</feature>
<feature type="compositionally biased region" description="Polar residues" evidence="1">
    <location>
        <begin position="78"/>
        <end position="97"/>
    </location>
</feature>
<feature type="compositionally biased region" description="Basic residues" evidence="1">
    <location>
        <begin position="213"/>
        <end position="222"/>
    </location>
</feature>
<feature type="compositionally biased region" description="Basic residues" evidence="1">
    <location>
        <begin position="291"/>
        <end position="305"/>
    </location>
</feature>
<evidence type="ECO:0000256" key="1">
    <source>
        <dbReference type="SAM" id="MobiDB-lite"/>
    </source>
</evidence>
<evidence type="ECO:0000305" key="2"/>
<accession>A8MV72</accession>
<reference key="1">
    <citation type="journal article" date="2006" name="Nature">
        <title>DNA sequence and analysis of human chromosome 8.</title>
        <authorList>
            <person name="Nusbaum C."/>
            <person name="Mikkelsen T.S."/>
            <person name="Zody M.C."/>
            <person name="Asakawa S."/>
            <person name="Taudien S."/>
            <person name="Garber M."/>
            <person name="Kodira C.D."/>
            <person name="Schueler M.G."/>
            <person name="Shimizu A."/>
            <person name="Whittaker C.A."/>
            <person name="Chang J.L."/>
            <person name="Cuomo C.A."/>
            <person name="Dewar K."/>
            <person name="FitzGerald M.G."/>
            <person name="Yang X."/>
            <person name="Allen N.R."/>
            <person name="Anderson S."/>
            <person name="Asakawa T."/>
            <person name="Blechschmidt K."/>
            <person name="Bloom T."/>
            <person name="Borowsky M.L."/>
            <person name="Butler J."/>
            <person name="Cook A."/>
            <person name="Corum B."/>
            <person name="DeArellano K."/>
            <person name="DeCaprio D."/>
            <person name="Dooley K.T."/>
            <person name="Dorris L. III"/>
            <person name="Engels R."/>
            <person name="Gloeckner G."/>
            <person name="Hafez N."/>
            <person name="Hagopian D.S."/>
            <person name="Hall J.L."/>
            <person name="Ishikawa S.K."/>
            <person name="Jaffe D.B."/>
            <person name="Kamat A."/>
            <person name="Kudoh J."/>
            <person name="Lehmann R."/>
            <person name="Lokitsang T."/>
            <person name="Macdonald P."/>
            <person name="Major J.E."/>
            <person name="Matthews C.D."/>
            <person name="Mauceli E."/>
            <person name="Menzel U."/>
            <person name="Mihalev A.H."/>
            <person name="Minoshima S."/>
            <person name="Murayama Y."/>
            <person name="Naylor J.W."/>
            <person name="Nicol R."/>
            <person name="Nguyen C."/>
            <person name="O'Leary S.B."/>
            <person name="O'Neill K."/>
            <person name="Parker S.C.J."/>
            <person name="Polley A."/>
            <person name="Raymond C.K."/>
            <person name="Reichwald K."/>
            <person name="Rodriguez J."/>
            <person name="Sasaki T."/>
            <person name="Schilhabel M."/>
            <person name="Siddiqui R."/>
            <person name="Smith C.L."/>
            <person name="Sneddon T.P."/>
            <person name="Talamas J.A."/>
            <person name="Tenzin P."/>
            <person name="Topham K."/>
            <person name="Venkataraman V."/>
            <person name="Wen G."/>
            <person name="Yamazaki S."/>
            <person name="Young S.K."/>
            <person name="Zeng Q."/>
            <person name="Zimmer A.R."/>
            <person name="Rosenthal A."/>
            <person name="Birren B.W."/>
            <person name="Platzer M."/>
            <person name="Shimizu N."/>
            <person name="Lander E.S."/>
        </authorList>
    </citation>
    <scope>NUCLEOTIDE SEQUENCE [LARGE SCALE GENOMIC DNA]</scope>
</reference>
<name>YH009_HUMAN</name>
<organism>
    <name type="scientific">Homo sapiens</name>
    <name type="common">Human</name>
    <dbReference type="NCBI Taxonomy" id="9606"/>
    <lineage>
        <taxon>Eukaryota</taxon>
        <taxon>Metazoa</taxon>
        <taxon>Chordata</taxon>
        <taxon>Craniata</taxon>
        <taxon>Vertebrata</taxon>
        <taxon>Euteleostomi</taxon>
        <taxon>Mammalia</taxon>
        <taxon>Eutheria</taxon>
        <taxon>Euarchontoglires</taxon>
        <taxon>Primates</taxon>
        <taxon>Haplorrhini</taxon>
        <taxon>Catarrhini</taxon>
        <taxon>Hominidae</taxon>
        <taxon>Homo</taxon>
    </lineage>
</organism>
<dbReference type="EMBL" id="AC067904">
    <property type="status" value="NOT_ANNOTATED_CDS"/>
    <property type="molecule type" value="Genomic_DNA"/>
</dbReference>
<dbReference type="iPTMnet" id="A8MV72"/>
<dbReference type="PhosphoSitePlus" id="A8MV72"/>
<dbReference type="BioMuta" id="-"/>
<dbReference type="MassIVE" id="A8MV72"/>
<dbReference type="neXtProt" id="NX_A8MV72"/>
<dbReference type="InParanoid" id="A8MV72"/>
<dbReference type="PAN-GO" id="A8MV72">
    <property type="GO annotations" value="4 GO annotations based on evolutionary models"/>
</dbReference>
<dbReference type="PhylomeDB" id="A8MV72"/>
<dbReference type="Pharos" id="A8MV72">
    <property type="development level" value="Tdark"/>
</dbReference>
<dbReference type="Proteomes" id="UP000005640">
    <property type="component" value="Unplaced"/>
</dbReference>
<dbReference type="RNAct" id="A8MV72">
    <property type="molecule type" value="protein"/>
</dbReference>
<dbReference type="InterPro" id="IPR043220">
    <property type="entry name" value="POM121-like_prot_1"/>
</dbReference>
<dbReference type="PANTHER" id="PTHR15566">
    <property type="entry name" value="POM121-LIKE"/>
    <property type="match status" value="1"/>
</dbReference>
<dbReference type="PANTHER" id="PTHR15566:SF7">
    <property type="entry name" value="UPF0607 PROTEIN ENSP00000332738-RELATED"/>
    <property type="match status" value="1"/>
</dbReference>
<dbReference type="Pfam" id="PF15229">
    <property type="entry name" value="POM121"/>
    <property type="match status" value="1"/>
</dbReference>